<comment type="function">
    <text evidence="2">Component of the ubiquinol-cytochrome c reductase complex (complex III or cytochrome b-c1 complex) that is part of the mitochondrial respiratory chain. The b-c1 complex mediates electron transfer from ubiquinol to cytochrome c. Contributes to the generation of a proton gradient across the mitochondrial membrane that is then used for ATP synthesis.</text>
</comment>
<comment type="cofactor">
    <cofactor evidence="2">
        <name>heme b</name>
        <dbReference type="ChEBI" id="CHEBI:60344"/>
    </cofactor>
    <text evidence="2">Binds 2 heme b groups non-covalently.</text>
</comment>
<comment type="subunit">
    <text evidence="2">The cytochrome bc1 complex contains 11 subunits: 3 respiratory subunits (MT-CYB, CYC1 and UQCRFS1), 2 core proteins (UQCRC1 and UQCRC2) and 6 low-molecular weight proteins (UQCRH/QCR6, UQCRB/QCR7, UQCRQ/QCR8, UQCR10/QCR9, UQCR11/QCR10 and a cleavage product of UQCRFS1). This cytochrome bc1 complex then forms a dimer.</text>
</comment>
<comment type="subcellular location">
    <subcellularLocation>
        <location evidence="2">Mitochondrion inner membrane</location>
        <topology evidence="2">Multi-pass membrane protein</topology>
    </subcellularLocation>
</comment>
<comment type="miscellaneous">
    <text evidence="1">Heme 1 (or BL or b562) is low-potential and absorbs at about 562 nm, and heme 2 (or BH or b566) is high-potential and absorbs at about 566 nm.</text>
</comment>
<comment type="similarity">
    <text evidence="3 4">Belongs to the cytochrome b family.</text>
</comment>
<comment type="caution">
    <text evidence="2">The full-length protein contains only eight transmembrane helices, not nine as predicted by bioinformatics tools.</text>
</comment>
<gene>
    <name type="primary">MT-CYB</name>
    <name type="synonym">COB</name>
    <name type="synonym">CYTB</name>
    <name type="synonym">MTCYB</name>
</gene>
<protein>
    <recommendedName>
        <fullName>Cytochrome b</fullName>
    </recommendedName>
    <alternativeName>
        <fullName>Complex III subunit 3</fullName>
    </alternativeName>
    <alternativeName>
        <fullName>Complex III subunit III</fullName>
    </alternativeName>
    <alternativeName>
        <fullName>Cytochrome b-c1 complex subunit 3</fullName>
    </alternativeName>
    <alternativeName>
        <fullName>Ubiquinol-cytochrome-c reductase complex cytochrome b subunit</fullName>
    </alternativeName>
</protein>
<geneLocation type="mitochondrion"/>
<keyword id="KW-0249">Electron transport</keyword>
<keyword id="KW-0349">Heme</keyword>
<keyword id="KW-0408">Iron</keyword>
<keyword id="KW-0472">Membrane</keyword>
<keyword id="KW-0479">Metal-binding</keyword>
<keyword id="KW-0496">Mitochondrion</keyword>
<keyword id="KW-0999">Mitochondrion inner membrane</keyword>
<keyword id="KW-0679">Respiratory chain</keyword>
<keyword id="KW-0812">Transmembrane</keyword>
<keyword id="KW-1133">Transmembrane helix</keyword>
<keyword id="KW-0813">Transport</keyword>
<keyword id="KW-0830">Ubiquinone</keyword>
<evidence type="ECO:0000250" key="1"/>
<evidence type="ECO:0000250" key="2">
    <source>
        <dbReference type="UniProtKB" id="P00157"/>
    </source>
</evidence>
<evidence type="ECO:0000255" key="3">
    <source>
        <dbReference type="PROSITE-ProRule" id="PRU00967"/>
    </source>
</evidence>
<evidence type="ECO:0000255" key="4">
    <source>
        <dbReference type="PROSITE-ProRule" id="PRU00968"/>
    </source>
</evidence>
<proteinExistence type="inferred from homology"/>
<reference key="1">
    <citation type="submission" date="2004-03" db="EMBL/GenBank/DDBJ databases">
        <title>Molecular phylogenetics of the Soricidae (Insectivora, Mammalia) based on mitochondrial cytochrome b gene sequences.</title>
        <authorList>
            <person name="Ohdachi S.D."/>
            <person name="Iwasa M.A."/>
            <person name="Abe H."/>
            <person name="Vogel P."/>
            <person name="Oshida T."/>
            <person name="Lin L.K."/>
            <person name="Hasegawa M."/>
        </authorList>
    </citation>
    <scope>NUCLEOTIDE SEQUENCE [GENOMIC DNA]</scope>
    <source>
        <tissue>Foot</tissue>
    </source>
</reference>
<dbReference type="EMBL" id="AB175078">
    <property type="protein sequence ID" value="BAE92643.1"/>
    <property type="molecule type" value="Genomic_DNA"/>
</dbReference>
<dbReference type="SMR" id="Q1XIQ3"/>
<dbReference type="GO" id="GO:0005743">
    <property type="term" value="C:mitochondrial inner membrane"/>
    <property type="evidence" value="ECO:0007669"/>
    <property type="project" value="UniProtKB-SubCell"/>
</dbReference>
<dbReference type="GO" id="GO:0045275">
    <property type="term" value="C:respiratory chain complex III"/>
    <property type="evidence" value="ECO:0007669"/>
    <property type="project" value="InterPro"/>
</dbReference>
<dbReference type="GO" id="GO:0046872">
    <property type="term" value="F:metal ion binding"/>
    <property type="evidence" value="ECO:0007669"/>
    <property type="project" value="UniProtKB-KW"/>
</dbReference>
<dbReference type="GO" id="GO:0008121">
    <property type="term" value="F:ubiquinol-cytochrome-c reductase activity"/>
    <property type="evidence" value="ECO:0007669"/>
    <property type="project" value="InterPro"/>
</dbReference>
<dbReference type="GO" id="GO:0006122">
    <property type="term" value="P:mitochondrial electron transport, ubiquinol to cytochrome c"/>
    <property type="evidence" value="ECO:0007669"/>
    <property type="project" value="TreeGrafter"/>
</dbReference>
<dbReference type="CDD" id="cd00290">
    <property type="entry name" value="cytochrome_b_C"/>
    <property type="match status" value="1"/>
</dbReference>
<dbReference type="CDD" id="cd00284">
    <property type="entry name" value="Cytochrome_b_N"/>
    <property type="match status" value="1"/>
</dbReference>
<dbReference type="FunFam" id="1.20.810.10:FF:000002">
    <property type="entry name" value="Cytochrome b"/>
    <property type="match status" value="1"/>
</dbReference>
<dbReference type="Gene3D" id="1.20.810.10">
    <property type="entry name" value="Cytochrome Bc1 Complex, Chain C"/>
    <property type="match status" value="1"/>
</dbReference>
<dbReference type="InterPro" id="IPR005798">
    <property type="entry name" value="Cyt_b/b6_C"/>
</dbReference>
<dbReference type="InterPro" id="IPR036150">
    <property type="entry name" value="Cyt_b/b6_C_sf"/>
</dbReference>
<dbReference type="InterPro" id="IPR005797">
    <property type="entry name" value="Cyt_b/b6_N"/>
</dbReference>
<dbReference type="InterPro" id="IPR027387">
    <property type="entry name" value="Cytb/b6-like_sf"/>
</dbReference>
<dbReference type="InterPro" id="IPR030689">
    <property type="entry name" value="Cytochrome_b"/>
</dbReference>
<dbReference type="InterPro" id="IPR048260">
    <property type="entry name" value="Cytochrome_b_C_euk/bac"/>
</dbReference>
<dbReference type="InterPro" id="IPR048259">
    <property type="entry name" value="Cytochrome_b_N_euk/bac"/>
</dbReference>
<dbReference type="InterPro" id="IPR016174">
    <property type="entry name" value="Di-haem_cyt_TM"/>
</dbReference>
<dbReference type="PANTHER" id="PTHR19271">
    <property type="entry name" value="CYTOCHROME B"/>
    <property type="match status" value="1"/>
</dbReference>
<dbReference type="PANTHER" id="PTHR19271:SF16">
    <property type="entry name" value="CYTOCHROME B"/>
    <property type="match status" value="1"/>
</dbReference>
<dbReference type="Pfam" id="PF00032">
    <property type="entry name" value="Cytochrom_B_C"/>
    <property type="match status" value="1"/>
</dbReference>
<dbReference type="Pfam" id="PF00033">
    <property type="entry name" value="Cytochrome_B"/>
    <property type="match status" value="1"/>
</dbReference>
<dbReference type="PIRSF" id="PIRSF038885">
    <property type="entry name" value="COB"/>
    <property type="match status" value="1"/>
</dbReference>
<dbReference type="SUPFAM" id="SSF81648">
    <property type="entry name" value="a domain/subunit of cytochrome bc1 complex (Ubiquinol-cytochrome c reductase)"/>
    <property type="match status" value="1"/>
</dbReference>
<dbReference type="SUPFAM" id="SSF81342">
    <property type="entry name" value="Transmembrane di-heme cytochromes"/>
    <property type="match status" value="1"/>
</dbReference>
<dbReference type="PROSITE" id="PS51003">
    <property type="entry name" value="CYTB_CTER"/>
    <property type="match status" value="1"/>
</dbReference>
<dbReference type="PROSITE" id="PS51002">
    <property type="entry name" value="CYTB_NTER"/>
    <property type="match status" value="1"/>
</dbReference>
<organism>
    <name type="scientific">Crocidura horsfieldii</name>
    <name type="common">Horsfield's shrew</name>
    <dbReference type="NCBI Taxonomy" id="268754"/>
    <lineage>
        <taxon>Eukaryota</taxon>
        <taxon>Metazoa</taxon>
        <taxon>Chordata</taxon>
        <taxon>Craniata</taxon>
        <taxon>Vertebrata</taxon>
        <taxon>Euteleostomi</taxon>
        <taxon>Mammalia</taxon>
        <taxon>Eutheria</taxon>
        <taxon>Laurasiatheria</taxon>
        <taxon>Eulipotyphla</taxon>
        <taxon>Soricidae</taxon>
        <taxon>Crocidurinae</taxon>
        <taxon>Crocidura</taxon>
    </lineage>
</organism>
<accession>Q1XIQ3</accession>
<name>CYB_CROHR</name>
<feature type="chain" id="PRO_0000254681" description="Cytochrome b">
    <location>
        <begin position="1"/>
        <end position="379"/>
    </location>
</feature>
<feature type="transmembrane region" description="Helical" evidence="2">
    <location>
        <begin position="33"/>
        <end position="53"/>
    </location>
</feature>
<feature type="transmembrane region" description="Helical" evidence="2">
    <location>
        <begin position="77"/>
        <end position="98"/>
    </location>
</feature>
<feature type="transmembrane region" description="Helical" evidence="2">
    <location>
        <begin position="113"/>
        <end position="133"/>
    </location>
</feature>
<feature type="transmembrane region" description="Helical" evidence="2">
    <location>
        <begin position="178"/>
        <end position="198"/>
    </location>
</feature>
<feature type="transmembrane region" description="Helical" evidence="2">
    <location>
        <begin position="226"/>
        <end position="246"/>
    </location>
</feature>
<feature type="transmembrane region" description="Helical" evidence="2">
    <location>
        <begin position="288"/>
        <end position="308"/>
    </location>
</feature>
<feature type="transmembrane region" description="Helical" evidence="2">
    <location>
        <begin position="320"/>
        <end position="340"/>
    </location>
</feature>
<feature type="transmembrane region" description="Helical" evidence="2">
    <location>
        <begin position="347"/>
        <end position="367"/>
    </location>
</feature>
<feature type="binding site" description="axial binding residue" evidence="2">
    <location>
        <position position="83"/>
    </location>
    <ligand>
        <name>heme b</name>
        <dbReference type="ChEBI" id="CHEBI:60344"/>
        <label>b562</label>
    </ligand>
    <ligandPart>
        <name>Fe</name>
        <dbReference type="ChEBI" id="CHEBI:18248"/>
    </ligandPart>
</feature>
<feature type="binding site" description="axial binding residue" evidence="2">
    <location>
        <position position="97"/>
    </location>
    <ligand>
        <name>heme b</name>
        <dbReference type="ChEBI" id="CHEBI:60344"/>
        <label>b566</label>
    </ligand>
    <ligandPart>
        <name>Fe</name>
        <dbReference type="ChEBI" id="CHEBI:18248"/>
    </ligandPart>
</feature>
<feature type="binding site" description="axial binding residue" evidence="2">
    <location>
        <position position="182"/>
    </location>
    <ligand>
        <name>heme b</name>
        <dbReference type="ChEBI" id="CHEBI:60344"/>
        <label>b562</label>
    </ligand>
    <ligandPart>
        <name>Fe</name>
        <dbReference type="ChEBI" id="CHEBI:18248"/>
    </ligandPart>
</feature>
<feature type="binding site" description="axial binding residue" evidence="2">
    <location>
        <position position="196"/>
    </location>
    <ligand>
        <name>heme b</name>
        <dbReference type="ChEBI" id="CHEBI:60344"/>
        <label>b566</label>
    </ligand>
    <ligandPart>
        <name>Fe</name>
        <dbReference type="ChEBI" id="CHEBI:18248"/>
    </ligandPart>
</feature>
<feature type="binding site" evidence="2">
    <location>
        <position position="201"/>
    </location>
    <ligand>
        <name>a ubiquinone</name>
        <dbReference type="ChEBI" id="CHEBI:16389"/>
    </ligand>
</feature>
<sequence>MNNIRKTHPLMKIVNSSFIDLPTPSNISSWWNFGSLLGICLIAQILTGLFLAMHYTSDTMTAFSSVTHICRDVNYGWLIRYLHANGASMFFICLFLHVGRGLYYGSYMFLETWNIGVLLLFAVMATAFMGYVLPWGQMSFWGATVITNLLSAIPYIGTNLVEWIWGGFSVDKATLTRFFAFHFILPFIVAALAGVHLLFLHETGSNNPSGLNSDTDKIPFHPYYTIKDILGALIMITTLSSLVLFSPDMLGDPDNYIPANPLNTPPHIKPEWYFLFAYAILRSIPNKLGGVLALVLSIAILTIIPLLHTAKQRSMMFRPMSQCLFWILVADLFTLTWIGGQPVEHPFVIIGQLASVIYFMLILLIMPITSMIENQLLKW</sequence>